<reference key="1">
    <citation type="journal article" date="1998" name="Nature">
        <title>Deciphering the biology of Mycobacterium tuberculosis from the complete genome sequence.</title>
        <authorList>
            <person name="Cole S.T."/>
            <person name="Brosch R."/>
            <person name="Parkhill J."/>
            <person name="Garnier T."/>
            <person name="Churcher C.M."/>
            <person name="Harris D.E."/>
            <person name="Gordon S.V."/>
            <person name="Eiglmeier K."/>
            <person name="Gas S."/>
            <person name="Barry C.E. III"/>
            <person name="Tekaia F."/>
            <person name="Badcock K."/>
            <person name="Basham D."/>
            <person name="Brown D."/>
            <person name="Chillingworth T."/>
            <person name="Connor R."/>
            <person name="Davies R.M."/>
            <person name="Devlin K."/>
            <person name="Feltwell T."/>
            <person name="Gentles S."/>
            <person name="Hamlin N."/>
            <person name="Holroyd S."/>
            <person name="Hornsby T."/>
            <person name="Jagels K."/>
            <person name="Krogh A."/>
            <person name="McLean J."/>
            <person name="Moule S."/>
            <person name="Murphy L.D."/>
            <person name="Oliver S."/>
            <person name="Osborne J."/>
            <person name="Quail M.A."/>
            <person name="Rajandream M.A."/>
            <person name="Rogers J."/>
            <person name="Rutter S."/>
            <person name="Seeger K."/>
            <person name="Skelton S."/>
            <person name="Squares S."/>
            <person name="Squares R."/>
            <person name="Sulston J.E."/>
            <person name="Taylor K."/>
            <person name="Whitehead S."/>
            <person name="Barrell B.G."/>
        </authorList>
    </citation>
    <scope>NUCLEOTIDE SEQUENCE [LARGE SCALE GENOMIC DNA]</scope>
    <source>
        <strain>ATCC 25618 / H37Rv</strain>
    </source>
</reference>
<reference key="2">
    <citation type="journal article" date="2011" name="Mol. Cell. Proteomics">
        <title>Proteogenomic analysis of Mycobacterium tuberculosis by high resolution mass spectrometry.</title>
        <authorList>
            <person name="Kelkar D.S."/>
            <person name="Kumar D."/>
            <person name="Kumar P."/>
            <person name="Balakrishnan L."/>
            <person name="Muthusamy B."/>
            <person name="Yadav A.K."/>
            <person name="Shrivastava P."/>
            <person name="Marimuthu A."/>
            <person name="Anand S."/>
            <person name="Sundaram H."/>
            <person name="Kingsbury R."/>
            <person name="Harsha H.C."/>
            <person name="Nair B."/>
            <person name="Prasad T.S."/>
            <person name="Chauhan D.S."/>
            <person name="Katoch K."/>
            <person name="Katoch V.M."/>
            <person name="Kumar P."/>
            <person name="Chaerkady R."/>
            <person name="Ramachandran S."/>
            <person name="Dash D."/>
            <person name="Pandey A."/>
        </authorList>
    </citation>
    <scope>IDENTIFICATION BY MASS SPECTROMETRY [LARGE SCALE ANALYSIS]</scope>
    <source>
        <strain>ATCC 25618 / H37Rv</strain>
    </source>
</reference>
<name>Y2001_MYCTU</name>
<dbReference type="EMBL" id="AL123456">
    <property type="protein sequence ID" value="CCP44773.1"/>
    <property type="molecule type" value="Genomic_DNA"/>
</dbReference>
<dbReference type="PIR" id="G70758">
    <property type="entry name" value="G70758"/>
</dbReference>
<dbReference type="RefSeq" id="NP_216517.1">
    <property type="nucleotide sequence ID" value="NC_000962.3"/>
</dbReference>
<dbReference type="RefSeq" id="WP_003900448.1">
    <property type="nucleotide sequence ID" value="NZ_NVQJ01000043.1"/>
</dbReference>
<dbReference type="SMR" id="P9WLN5"/>
<dbReference type="FunCoup" id="P9WLN5">
    <property type="interactions" value="1"/>
</dbReference>
<dbReference type="STRING" id="83332.Rv2001"/>
<dbReference type="PaxDb" id="83332-Rv2001"/>
<dbReference type="DNASU" id="888880"/>
<dbReference type="GeneID" id="888880"/>
<dbReference type="KEGG" id="mtu:Rv2001"/>
<dbReference type="KEGG" id="mtv:RVBD_2001"/>
<dbReference type="PATRIC" id="fig|83332.111.peg.2227"/>
<dbReference type="TubercuList" id="Rv2001"/>
<dbReference type="eggNOG" id="COG3884">
    <property type="taxonomic scope" value="Bacteria"/>
</dbReference>
<dbReference type="InParanoid" id="P9WLN5"/>
<dbReference type="OrthoDB" id="5242854at2"/>
<dbReference type="Proteomes" id="UP000001584">
    <property type="component" value="Chromosome"/>
</dbReference>
<dbReference type="GO" id="GO:0047617">
    <property type="term" value="F:fatty acyl-CoA hydrolase activity"/>
    <property type="evidence" value="ECO:0000318"/>
    <property type="project" value="GO_Central"/>
</dbReference>
<dbReference type="GO" id="GO:0006633">
    <property type="term" value="P:fatty acid biosynthetic process"/>
    <property type="evidence" value="ECO:0007669"/>
    <property type="project" value="InterPro"/>
</dbReference>
<dbReference type="Gene3D" id="3.10.129.10">
    <property type="entry name" value="Hotdog Thioesterase"/>
    <property type="match status" value="1"/>
</dbReference>
<dbReference type="InterPro" id="IPR050563">
    <property type="entry name" value="4-hydroxybenzoyl-CoA_TE"/>
</dbReference>
<dbReference type="InterPro" id="IPR049427">
    <property type="entry name" value="Acyl-ACP_TE_C"/>
</dbReference>
<dbReference type="InterPro" id="IPR002864">
    <property type="entry name" value="Acyl-ACP_thioesterase_NHD"/>
</dbReference>
<dbReference type="InterPro" id="IPR029069">
    <property type="entry name" value="HotDog_dom_sf"/>
</dbReference>
<dbReference type="PANTHER" id="PTHR31793">
    <property type="entry name" value="4-HYDROXYBENZOYL-COA THIOESTERASE FAMILY MEMBER"/>
    <property type="match status" value="1"/>
</dbReference>
<dbReference type="PANTHER" id="PTHR31793:SF24">
    <property type="entry name" value="LONG-CHAIN ACYL-COA THIOESTERASE FADM"/>
    <property type="match status" value="1"/>
</dbReference>
<dbReference type="Pfam" id="PF01643">
    <property type="entry name" value="Acyl-ACP_TE"/>
    <property type="match status" value="1"/>
</dbReference>
<dbReference type="Pfam" id="PF20791">
    <property type="entry name" value="Acyl-ACP_TE_C"/>
    <property type="match status" value="1"/>
</dbReference>
<dbReference type="SUPFAM" id="SSF54637">
    <property type="entry name" value="Thioesterase/thiol ester dehydrase-isomerase"/>
    <property type="match status" value="2"/>
</dbReference>
<keyword id="KW-1185">Reference proteome</keyword>
<organism>
    <name type="scientific">Mycobacterium tuberculosis (strain ATCC 25618 / H37Rv)</name>
    <dbReference type="NCBI Taxonomy" id="83332"/>
    <lineage>
        <taxon>Bacteria</taxon>
        <taxon>Bacillati</taxon>
        <taxon>Actinomycetota</taxon>
        <taxon>Actinomycetes</taxon>
        <taxon>Mycobacteriales</taxon>
        <taxon>Mycobacteriaceae</taxon>
        <taxon>Mycobacterium</taxon>
        <taxon>Mycobacterium tuberculosis complex</taxon>
    </lineage>
</organism>
<accession>P9WLN5</accession>
<accession>L0T8H6</accession>
<accession>Q10856</accession>
<protein>
    <recommendedName>
        <fullName>Uncharacterized protein Rv2001</fullName>
    </recommendedName>
</protein>
<feature type="chain" id="PRO_0000103929" description="Uncharacterized protein Rv2001">
    <location>
        <begin position="1"/>
        <end position="250"/>
    </location>
</feature>
<proteinExistence type="evidence at protein level"/>
<sequence length="250" mass="28734">MHHNRDVDLALVERPSSGYVYTTGWRLATTDIDEHQQLRLDGVARYIQEVGAEHLADAQLAEVHPHWIVLRTVIDVINPIELPSDITFHRWCAALSTRWCSMRVQLQGSAGGRIETEGFWICVNKDTLTPSRLTDDCIARFGSTTENHRLKWRPWLTGPNIDGTETPFPLRRTDIDPFEHVNNTIYWHGVHEILCQIPTLTAPYRAVLEYRSPIKSGEPLTIRYEQHDDVVRMHFVVGDDVRAAALLRRL</sequence>
<gene>
    <name type="ordered locus">Rv2001</name>
    <name type="ORF">MTCY39.17c</name>
</gene>